<keyword id="KW-0413">Isomerase</keyword>
<keyword id="KW-0460">Magnesium</keyword>
<keyword id="KW-0479">Metal-binding</keyword>
<keyword id="KW-0597">Phosphoprotein</keyword>
<comment type="function">
    <text evidence="1">Catalyzes the conversion of glucosamine-6-phosphate to glucosamine-1-phosphate.</text>
</comment>
<comment type="catalytic activity">
    <reaction evidence="1">
        <text>alpha-D-glucosamine 1-phosphate = D-glucosamine 6-phosphate</text>
        <dbReference type="Rhea" id="RHEA:23424"/>
        <dbReference type="ChEBI" id="CHEBI:58516"/>
        <dbReference type="ChEBI" id="CHEBI:58725"/>
        <dbReference type="EC" id="5.4.2.10"/>
    </reaction>
</comment>
<comment type="cofactor">
    <cofactor evidence="1">
        <name>Mg(2+)</name>
        <dbReference type="ChEBI" id="CHEBI:18420"/>
    </cofactor>
    <text evidence="1">Binds 1 Mg(2+) ion per subunit.</text>
</comment>
<comment type="PTM">
    <text evidence="1">Activated by phosphorylation.</text>
</comment>
<comment type="similarity">
    <text evidence="1">Belongs to the phosphohexose mutase family.</text>
</comment>
<gene>
    <name evidence="1" type="primary">glmM</name>
    <name type="ordered locus">NAMH_1393</name>
</gene>
<sequence length="440" mass="48793">MKLFGTDGVRGKAGEFLTPFLAMKLAMSFGECLPKKTGKILVGKDTRRSGYMIENALVSGLTAIGYDVIQIGPMPTPAIAFLTEDMRCDGGIMISASHNPYYDNGIKFFDSFGNKLSQEFEEKIEKRYFENNFNLKTEKEIGKSKRIDDVIGRYIVHIKSSFPKHVNLNGMRIVLDTANGAAYKVAPTIFTELGADVITINDEPDGFNINQNAGAMHPEFLAKKVLEYRADIGFALDGDADRLVVVDEKGEIVNGDKLLGALAYYLHKQNKLKNNGVAVTVMSNGALEKFLNDMGIKVYRSNVGDKYVLEVMKEKDLNFGGEQSGHIIFSDYAKTGDGLVSALQAVAYLIQSGKKASEAFDLFELYPQIQANIQVSSKPPLNEIEGAKELLDEVEKEGYRHLVRYSGTENKLRLLVEGESENKAKELLVKLKEFFKSKLS</sequence>
<evidence type="ECO:0000255" key="1">
    <source>
        <dbReference type="HAMAP-Rule" id="MF_01554"/>
    </source>
</evidence>
<proteinExistence type="inferred from homology"/>
<protein>
    <recommendedName>
        <fullName evidence="1">Phosphoglucosamine mutase</fullName>
        <ecNumber evidence="1">5.4.2.10</ecNumber>
    </recommendedName>
</protein>
<dbReference type="EC" id="5.4.2.10" evidence="1"/>
<dbReference type="EMBL" id="CP001279">
    <property type="protein sequence ID" value="ACM93177.1"/>
    <property type="molecule type" value="Genomic_DNA"/>
</dbReference>
<dbReference type="RefSeq" id="WP_015902229.1">
    <property type="nucleotide sequence ID" value="NC_012115.1"/>
</dbReference>
<dbReference type="SMR" id="B9L5Z7"/>
<dbReference type="STRING" id="598659.NAMH_1393"/>
<dbReference type="KEGG" id="nam:NAMH_1393"/>
<dbReference type="eggNOG" id="COG1109">
    <property type="taxonomic scope" value="Bacteria"/>
</dbReference>
<dbReference type="HOGENOM" id="CLU_016950_7_0_7"/>
<dbReference type="OrthoDB" id="9806956at2"/>
<dbReference type="Proteomes" id="UP000000448">
    <property type="component" value="Chromosome"/>
</dbReference>
<dbReference type="GO" id="GO:0005829">
    <property type="term" value="C:cytosol"/>
    <property type="evidence" value="ECO:0007669"/>
    <property type="project" value="TreeGrafter"/>
</dbReference>
<dbReference type="GO" id="GO:0000287">
    <property type="term" value="F:magnesium ion binding"/>
    <property type="evidence" value="ECO:0007669"/>
    <property type="project" value="UniProtKB-UniRule"/>
</dbReference>
<dbReference type="GO" id="GO:0008966">
    <property type="term" value="F:phosphoglucosamine mutase activity"/>
    <property type="evidence" value="ECO:0007669"/>
    <property type="project" value="UniProtKB-UniRule"/>
</dbReference>
<dbReference type="GO" id="GO:0004615">
    <property type="term" value="F:phosphomannomutase activity"/>
    <property type="evidence" value="ECO:0007669"/>
    <property type="project" value="TreeGrafter"/>
</dbReference>
<dbReference type="GO" id="GO:0005975">
    <property type="term" value="P:carbohydrate metabolic process"/>
    <property type="evidence" value="ECO:0007669"/>
    <property type="project" value="InterPro"/>
</dbReference>
<dbReference type="GO" id="GO:0009252">
    <property type="term" value="P:peptidoglycan biosynthetic process"/>
    <property type="evidence" value="ECO:0007669"/>
    <property type="project" value="TreeGrafter"/>
</dbReference>
<dbReference type="GO" id="GO:0006048">
    <property type="term" value="P:UDP-N-acetylglucosamine biosynthetic process"/>
    <property type="evidence" value="ECO:0007669"/>
    <property type="project" value="TreeGrafter"/>
</dbReference>
<dbReference type="CDD" id="cd05802">
    <property type="entry name" value="GlmM"/>
    <property type="match status" value="1"/>
</dbReference>
<dbReference type="FunFam" id="3.40.120.10:FF:000001">
    <property type="entry name" value="Phosphoglucosamine mutase"/>
    <property type="match status" value="1"/>
</dbReference>
<dbReference type="FunFam" id="3.40.120.10:FF:000003">
    <property type="entry name" value="Phosphoglucosamine mutase"/>
    <property type="match status" value="1"/>
</dbReference>
<dbReference type="Gene3D" id="3.40.120.10">
    <property type="entry name" value="Alpha-D-Glucose-1,6-Bisphosphate, subunit A, domain 3"/>
    <property type="match status" value="3"/>
</dbReference>
<dbReference type="Gene3D" id="3.30.310.50">
    <property type="entry name" value="Alpha-D-phosphohexomutase, C-terminal domain"/>
    <property type="match status" value="1"/>
</dbReference>
<dbReference type="HAMAP" id="MF_01554_B">
    <property type="entry name" value="GlmM_B"/>
    <property type="match status" value="1"/>
</dbReference>
<dbReference type="InterPro" id="IPR005844">
    <property type="entry name" value="A-D-PHexomutase_a/b/a-I"/>
</dbReference>
<dbReference type="InterPro" id="IPR016055">
    <property type="entry name" value="A-D-PHexomutase_a/b/a-I/II/III"/>
</dbReference>
<dbReference type="InterPro" id="IPR005845">
    <property type="entry name" value="A-D-PHexomutase_a/b/a-II"/>
</dbReference>
<dbReference type="InterPro" id="IPR005846">
    <property type="entry name" value="A-D-PHexomutase_a/b/a-III"/>
</dbReference>
<dbReference type="InterPro" id="IPR005843">
    <property type="entry name" value="A-D-PHexomutase_C"/>
</dbReference>
<dbReference type="InterPro" id="IPR036900">
    <property type="entry name" value="A-D-PHexomutase_C_sf"/>
</dbReference>
<dbReference type="InterPro" id="IPR016066">
    <property type="entry name" value="A-D-PHexomutase_CS"/>
</dbReference>
<dbReference type="InterPro" id="IPR005841">
    <property type="entry name" value="Alpha-D-phosphohexomutase_SF"/>
</dbReference>
<dbReference type="InterPro" id="IPR006352">
    <property type="entry name" value="GlmM_bact"/>
</dbReference>
<dbReference type="InterPro" id="IPR050060">
    <property type="entry name" value="Phosphoglucosamine_mutase"/>
</dbReference>
<dbReference type="NCBIfam" id="TIGR01455">
    <property type="entry name" value="glmM"/>
    <property type="match status" value="1"/>
</dbReference>
<dbReference type="NCBIfam" id="NF008139">
    <property type="entry name" value="PRK10887.1"/>
    <property type="match status" value="1"/>
</dbReference>
<dbReference type="PANTHER" id="PTHR42946:SF1">
    <property type="entry name" value="PHOSPHOGLUCOMUTASE (ALPHA-D-GLUCOSE-1,6-BISPHOSPHATE-DEPENDENT)"/>
    <property type="match status" value="1"/>
</dbReference>
<dbReference type="PANTHER" id="PTHR42946">
    <property type="entry name" value="PHOSPHOHEXOSE MUTASE"/>
    <property type="match status" value="1"/>
</dbReference>
<dbReference type="Pfam" id="PF02878">
    <property type="entry name" value="PGM_PMM_I"/>
    <property type="match status" value="1"/>
</dbReference>
<dbReference type="Pfam" id="PF02879">
    <property type="entry name" value="PGM_PMM_II"/>
    <property type="match status" value="1"/>
</dbReference>
<dbReference type="Pfam" id="PF02880">
    <property type="entry name" value="PGM_PMM_III"/>
    <property type="match status" value="1"/>
</dbReference>
<dbReference type="Pfam" id="PF00408">
    <property type="entry name" value="PGM_PMM_IV"/>
    <property type="match status" value="1"/>
</dbReference>
<dbReference type="PRINTS" id="PR00509">
    <property type="entry name" value="PGMPMM"/>
</dbReference>
<dbReference type="SUPFAM" id="SSF55957">
    <property type="entry name" value="Phosphoglucomutase, C-terminal domain"/>
    <property type="match status" value="1"/>
</dbReference>
<dbReference type="SUPFAM" id="SSF53738">
    <property type="entry name" value="Phosphoglucomutase, first 3 domains"/>
    <property type="match status" value="3"/>
</dbReference>
<dbReference type="PROSITE" id="PS00710">
    <property type="entry name" value="PGM_PMM"/>
    <property type="match status" value="1"/>
</dbReference>
<feature type="chain" id="PRO_1000185378" description="Phosphoglucosamine mutase">
    <location>
        <begin position="1"/>
        <end position="440"/>
    </location>
</feature>
<feature type="active site" description="Phosphoserine intermediate" evidence="1">
    <location>
        <position position="97"/>
    </location>
</feature>
<feature type="binding site" description="via phosphate group" evidence="1">
    <location>
        <position position="97"/>
    </location>
    <ligand>
        <name>Mg(2+)</name>
        <dbReference type="ChEBI" id="CHEBI:18420"/>
    </ligand>
</feature>
<feature type="binding site" evidence="1">
    <location>
        <position position="237"/>
    </location>
    <ligand>
        <name>Mg(2+)</name>
        <dbReference type="ChEBI" id="CHEBI:18420"/>
    </ligand>
</feature>
<feature type="binding site" evidence="1">
    <location>
        <position position="239"/>
    </location>
    <ligand>
        <name>Mg(2+)</name>
        <dbReference type="ChEBI" id="CHEBI:18420"/>
    </ligand>
</feature>
<feature type="binding site" evidence="1">
    <location>
        <position position="241"/>
    </location>
    <ligand>
        <name>Mg(2+)</name>
        <dbReference type="ChEBI" id="CHEBI:18420"/>
    </ligand>
</feature>
<feature type="modified residue" description="Phosphoserine" evidence="1">
    <location>
        <position position="97"/>
    </location>
</feature>
<reference key="1">
    <citation type="journal article" date="2009" name="PLoS Genet.">
        <title>Adaptations to submarine hydrothermal environments exemplified by the genome of Nautilia profundicola.</title>
        <authorList>
            <person name="Campbell B.J."/>
            <person name="Smith J.L."/>
            <person name="Hanson T.E."/>
            <person name="Klotz M.G."/>
            <person name="Stein L.Y."/>
            <person name="Lee C.K."/>
            <person name="Wu D."/>
            <person name="Robinson J.M."/>
            <person name="Khouri H.M."/>
            <person name="Eisen J.A."/>
            <person name="Cary S.C."/>
        </authorList>
    </citation>
    <scope>NUCLEOTIDE SEQUENCE [LARGE SCALE GENOMIC DNA]</scope>
    <source>
        <strain>ATCC BAA-1463 / DSM 18972 / AmH</strain>
    </source>
</reference>
<accession>B9L5Z7</accession>
<name>GLMM_NAUPA</name>
<organism>
    <name type="scientific">Nautilia profundicola (strain ATCC BAA-1463 / DSM 18972 / AmH)</name>
    <dbReference type="NCBI Taxonomy" id="598659"/>
    <lineage>
        <taxon>Bacteria</taxon>
        <taxon>Pseudomonadati</taxon>
        <taxon>Campylobacterota</taxon>
        <taxon>Epsilonproteobacteria</taxon>
        <taxon>Nautiliales</taxon>
        <taxon>Nautiliaceae</taxon>
        <taxon>Nautilia</taxon>
    </lineage>
</organism>